<sequence length="315" mass="35431">MLIVTGGAGFIGSNIVQALNARGREDILVVDDLTDGTKFANIADARICDYLDKDEFLRRIASGDSFGDRIEAIIHQGACSTTTEWDGRYMMENNYAYSKTLLHYCLERRIPFLYASSAATYGGGQVFCEEPQYERPLNVYGYSKALFDQYVRRVLPTADSQVAGFRYFNVYGPREQHKGSMASVAFHLRNQLLKDGSVNLFEGCDGYGDGEQRRDFIYVGDVVDVNLWFLDHPEVSGIYNVGTGRSQTFNDVAHAVLKAHEGGELQYVPFPEHLKGRYQSFTEADLTRLRGAGFDGSFLTVEEGVARYMEWLQQN</sequence>
<organism>
    <name type="scientific">Syntrophotalea carbinolica (strain DSM 2380 / NBRC 103641 / GraBd1)</name>
    <name type="common">Pelobacter carbinolicus</name>
    <dbReference type="NCBI Taxonomy" id="338963"/>
    <lineage>
        <taxon>Bacteria</taxon>
        <taxon>Pseudomonadati</taxon>
        <taxon>Thermodesulfobacteriota</taxon>
        <taxon>Desulfuromonadia</taxon>
        <taxon>Desulfuromonadales</taxon>
        <taxon>Syntrophotaleaceae</taxon>
        <taxon>Syntrophotalea</taxon>
    </lineage>
</organism>
<gene>
    <name evidence="1" type="primary">hldD</name>
    <name type="ordered locus">Pcar_0024</name>
</gene>
<evidence type="ECO:0000255" key="1">
    <source>
        <dbReference type="HAMAP-Rule" id="MF_01601"/>
    </source>
</evidence>
<comment type="function">
    <text evidence="1">Catalyzes the interconversion between ADP-D-glycero-beta-D-manno-heptose and ADP-L-glycero-beta-D-manno-heptose via an epimerization at carbon 6 of the heptose.</text>
</comment>
<comment type="catalytic activity">
    <reaction evidence="1">
        <text>ADP-D-glycero-beta-D-manno-heptose = ADP-L-glycero-beta-D-manno-heptose</text>
        <dbReference type="Rhea" id="RHEA:17577"/>
        <dbReference type="ChEBI" id="CHEBI:59967"/>
        <dbReference type="ChEBI" id="CHEBI:61506"/>
        <dbReference type="EC" id="5.1.3.20"/>
    </reaction>
</comment>
<comment type="cofactor">
    <cofactor evidence="1">
        <name>NADP(+)</name>
        <dbReference type="ChEBI" id="CHEBI:58349"/>
    </cofactor>
    <text evidence="1">Binds 1 NADP(+) per subunit.</text>
</comment>
<comment type="pathway">
    <text evidence="1">Nucleotide-sugar biosynthesis; ADP-L-glycero-beta-D-manno-heptose biosynthesis; ADP-L-glycero-beta-D-manno-heptose from D-glycero-beta-D-manno-heptose 7-phosphate: step 4/4.</text>
</comment>
<comment type="subunit">
    <text evidence="1">Homopentamer.</text>
</comment>
<comment type="domain">
    <text evidence="1">Contains a large N-terminal NADP-binding domain, and a smaller C-terminal substrate-binding domain.</text>
</comment>
<comment type="similarity">
    <text evidence="1">Belongs to the NAD(P)-dependent epimerase/dehydratase family. HldD subfamily.</text>
</comment>
<protein>
    <recommendedName>
        <fullName evidence="1">ADP-L-glycero-D-manno-heptose-6-epimerase</fullName>
        <ecNumber evidence="1">5.1.3.20</ecNumber>
    </recommendedName>
    <alternativeName>
        <fullName evidence="1">ADP-L-glycero-beta-D-manno-heptose-6-epimerase</fullName>
        <shortName evidence="1">ADP-glyceromanno-heptose 6-epimerase</shortName>
        <shortName evidence="1">ADP-hep 6-epimerase</shortName>
        <shortName evidence="1">AGME</shortName>
    </alternativeName>
</protein>
<proteinExistence type="inferred from homology"/>
<feature type="chain" id="PRO_0000255735" description="ADP-L-glycero-D-manno-heptose-6-epimerase">
    <location>
        <begin position="1"/>
        <end position="315"/>
    </location>
</feature>
<feature type="active site" description="Proton acceptor" evidence="1">
    <location>
        <position position="140"/>
    </location>
</feature>
<feature type="active site" description="Proton acceptor" evidence="1">
    <location>
        <position position="178"/>
    </location>
</feature>
<feature type="binding site" evidence="1">
    <location>
        <begin position="10"/>
        <end position="11"/>
    </location>
    <ligand>
        <name>NADP(+)</name>
        <dbReference type="ChEBI" id="CHEBI:58349"/>
    </ligand>
</feature>
<feature type="binding site" evidence="1">
    <location>
        <begin position="31"/>
        <end position="32"/>
    </location>
    <ligand>
        <name>NADP(+)</name>
        <dbReference type="ChEBI" id="CHEBI:58349"/>
    </ligand>
</feature>
<feature type="binding site" evidence="1">
    <location>
        <position position="38"/>
    </location>
    <ligand>
        <name>NADP(+)</name>
        <dbReference type="ChEBI" id="CHEBI:58349"/>
    </ligand>
</feature>
<feature type="binding site" evidence="1">
    <location>
        <position position="53"/>
    </location>
    <ligand>
        <name>NADP(+)</name>
        <dbReference type="ChEBI" id="CHEBI:58349"/>
    </ligand>
</feature>
<feature type="binding site" evidence="1">
    <location>
        <begin position="76"/>
        <end position="80"/>
    </location>
    <ligand>
        <name>NADP(+)</name>
        <dbReference type="ChEBI" id="CHEBI:58349"/>
    </ligand>
</feature>
<feature type="binding site" evidence="1">
    <location>
        <position position="93"/>
    </location>
    <ligand>
        <name>NADP(+)</name>
        <dbReference type="ChEBI" id="CHEBI:58349"/>
    </ligand>
</feature>
<feature type="binding site" evidence="1">
    <location>
        <position position="144"/>
    </location>
    <ligand>
        <name>NADP(+)</name>
        <dbReference type="ChEBI" id="CHEBI:58349"/>
    </ligand>
</feature>
<feature type="binding site" evidence="1">
    <location>
        <position position="169"/>
    </location>
    <ligand>
        <name>substrate</name>
    </ligand>
</feature>
<feature type="binding site" evidence="1">
    <location>
        <position position="170"/>
    </location>
    <ligand>
        <name>NADP(+)</name>
        <dbReference type="ChEBI" id="CHEBI:58349"/>
    </ligand>
</feature>
<feature type="binding site" evidence="1">
    <location>
        <position position="178"/>
    </location>
    <ligand>
        <name>NADP(+)</name>
        <dbReference type="ChEBI" id="CHEBI:58349"/>
    </ligand>
</feature>
<feature type="binding site" evidence="1">
    <location>
        <position position="180"/>
    </location>
    <ligand>
        <name>substrate</name>
    </ligand>
</feature>
<feature type="binding site" evidence="1">
    <location>
        <position position="187"/>
    </location>
    <ligand>
        <name>substrate</name>
    </ligand>
</feature>
<feature type="binding site" evidence="1">
    <location>
        <begin position="201"/>
        <end position="204"/>
    </location>
    <ligand>
        <name>substrate</name>
    </ligand>
</feature>
<feature type="binding site" evidence="1">
    <location>
        <position position="214"/>
    </location>
    <ligand>
        <name>substrate</name>
    </ligand>
</feature>
<feature type="binding site" evidence="1">
    <location>
        <position position="278"/>
    </location>
    <ligand>
        <name>substrate</name>
    </ligand>
</feature>
<name>HLDD_SYNC1</name>
<dbReference type="EC" id="5.1.3.20" evidence="1"/>
<dbReference type="EMBL" id="CP000142">
    <property type="protein sequence ID" value="ABA87287.1"/>
    <property type="molecule type" value="Genomic_DNA"/>
</dbReference>
<dbReference type="RefSeq" id="WP_011339671.1">
    <property type="nucleotide sequence ID" value="NC_007498.2"/>
</dbReference>
<dbReference type="SMR" id="Q3A8K5"/>
<dbReference type="STRING" id="338963.Pcar_0024"/>
<dbReference type="KEGG" id="pca:Pcar_0024"/>
<dbReference type="eggNOG" id="COG0451">
    <property type="taxonomic scope" value="Bacteria"/>
</dbReference>
<dbReference type="HOGENOM" id="CLU_007383_1_3_7"/>
<dbReference type="OrthoDB" id="9803010at2"/>
<dbReference type="UniPathway" id="UPA00356">
    <property type="reaction ID" value="UER00440"/>
</dbReference>
<dbReference type="Proteomes" id="UP000002534">
    <property type="component" value="Chromosome"/>
</dbReference>
<dbReference type="GO" id="GO:0008712">
    <property type="term" value="F:ADP-glyceromanno-heptose 6-epimerase activity"/>
    <property type="evidence" value="ECO:0007669"/>
    <property type="project" value="UniProtKB-UniRule"/>
</dbReference>
<dbReference type="GO" id="GO:0050661">
    <property type="term" value="F:NADP binding"/>
    <property type="evidence" value="ECO:0007669"/>
    <property type="project" value="InterPro"/>
</dbReference>
<dbReference type="GO" id="GO:0097171">
    <property type="term" value="P:ADP-L-glycero-beta-D-manno-heptose biosynthetic process"/>
    <property type="evidence" value="ECO:0007669"/>
    <property type="project" value="UniProtKB-UniPathway"/>
</dbReference>
<dbReference type="GO" id="GO:0005975">
    <property type="term" value="P:carbohydrate metabolic process"/>
    <property type="evidence" value="ECO:0007669"/>
    <property type="project" value="UniProtKB-UniRule"/>
</dbReference>
<dbReference type="CDD" id="cd05248">
    <property type="entry name" value="ADP_GME_SDR_e"/>
    <property type="match status" value="1"/>
</dbReference>
<dbReference type="Gene3D" id="3.40.50.720">
    <property type="entry name" value="NAD(P)-binding Rossmann-like Domain"/>
    <property type="match status" value="1"/>
</dbReference>
<dbReference type="Gene3D" id="3.90.25.10">
    <property type="entry name" value="UDP-galactose 4-epimerase, domain 1"/>
    <property type="match status" value="1"/>
</dbReference>
<dbReference type="HAMAP" id="MF_01601">
    <property type="entry name" value="Heptose_epimerase"/>
    <property type="match status" value="1"/>
</dbReference>
<dbReference type="InterPro" id="IPR001509">
    <property type="entry name" value="Epimerase_deHydtase"/>
</dbReference>
<dbReference type="InterPro" id="IPR011912">
    <property type="entry name" value="Heptose_epim"/>
</dbReference>
<dbReference type="InterPro" id="IPR036291">
    <property type="entry name" value="NAD(P)-bd_dom_sf"/>
</dbReference>
<dbReference type="NCBIfam" id="TIGR02197">
    <property type="entry name" value="heptose_epim"/>
    <property type="match status" value="1"/>
</dbReference>
<dbReference type="NCBIfam" id="NF008360">
    <property type="entry name" value="PRK11150.1"/>
    <property type="match status" value="1"/>
</dbReference>
<dbReference type="PANTHER" id="PTHR43103:SF3">
    <property type="entry name" value="ADP-L-GLYCERO-D-MANNO-HEPTOSE-6-EPIMERASE"/>
    <property type="match status" value="1"/>
</dbReference>
<dbReference type="PANTHER" id="PTHR43103">
    <property type="entry name" value="NUCLEOSIDE-DIPHOSPHATE-SUGAR EPIMERASE"/>
    <property type="match status" value="1"/>
</dbReference>
<dbReference type="Pfam" id="PF01370">
    <property type="entry name" value="Epimerase"/>
    <property type="match status" value="1"/>
</dbReference>
<dbReference type="SUPFAM" id="SSF51735">
    <property type="entry name" value="NAD(P)-binding Rossmann-fold domains"/>
    <property type="match status" value="1"/>
</dbReference>
<reference key="1">
    <citation type="submission" date="2005-10" db="EMBL/GenBank/DDBJ databases">
        <title>Complete sequence of Pelobacter carbinolicus DSM 2380.</title>
        <authorList>
            <person name="Copeland A."/>
            <person name="Lucas S."/>
            <person name="Lapidus A."/>
            <person name="Barry K."/>
            <person name="Detter J.C."/>
            <person name="Glavina T."/>
            <person name="Hammon N."/>
            <person name="Israni S."/>
            <person name="Pitluck S."/>
            <person name="Chertkov O."/>
            <person name="Schmutz J."/>
            <person name="Larimer F."/>
            <person name="Land M."/>
            <person name="Kyrpides N."/>
            <person name="Ivanova N."/>
            <person name="Richardson P."/>
        </authorList>
    </citation>
    <scope>NUCLEOTIDE SEQUENCE [LARGE SCALE GENOMIC DNA]</scope>
    <source>
        <strain>DSM 2380 / NBRC 103641 / GraBd1</strain>
    </source>
</reference>
<accession>Q3A8K5</accession>
<keyword id="KW-0119">Carbohydrate metabolism</keyword>
<keyword id="KW-0413">Isomerase</keyword>
<keyword id="KW-0521">NADP</keyword>
<keyword id="KW-1185">Reference proteome</keyword>